<gene>
    <name type="primary">Rgs17</name>
    <name evidence="7" type="synonym">Rgsz2</name>
</gene>
<protein>
    <recommendedName>
        <fullName>Regulator of G-protein signaling 17</fullName>
        <shortName>RGS17</shortName>
    </recommendedName>
    <alternativeName>
        <fullName>Regulator of Gz-selective protein signaling 2</fullName>
    </alternativeName>
</protein>
<evidence type="ECO:0000250" key="1">
    <source>
        <dbReference type="UniProtKB" id="Q9UGC6"/>
    </source>
</evidence>
<evidence type="ECO:0000255" key="2">
    <source>
        <dbReference type="PROSITE-ProRule" id="PRU00171"/>
    </source>
</evidence>
<evidence type="ECO:0000256" key="3">
    <source>
        <dbReference type="SAM" id="MobiDB-lite"/>
    </source>
</evidence>
<evidence type="ECO:0000269" key="4">
    <source>
    </source>
</evidence>
<evidence type="ECO:0000269" key="5">
    <source>
    </source>
</evidence>
<evidence type="ECO:0000269" key="6">
    <source>
    </source>
</evidence>
<evidence type="ECO:0000303" key="7">
    <source ref="1"/>
</evidence>
<evidence type="ECO:0007744" key="8">
    <source>
    </source>
</evidence>
<sequence>MRKRQQSQNEGTQAVSQAPGNQRPNNTCCFCWCCCCSCSCLTVRNEERGDSSGRSPHTTKMESIQVLEECQNPTADEVLSWSQNFDKMMKTPAGRNLFREFLRTEYSEENLLFWLACEDLKKEQNKKAVEEKARMIYEDYISILSPKEVSLDSRVREVINRSLLDPSPHMYEDAQLQIYTLMHRDSFPRFLNSQIYKAFVESTTSCTSES</sequence>
<dbReference type="EMBL" id="AF191555">
    <property type="protein sequence ID" value="AAF05758.1"/>
    <property type="molecule type" value="mRNA"/>
</dbReference>
<dbReference type="EMBL" id="AK018279">
    <property type="protein sequence ID" value="BAB31145.1"/>
    <property type="molecule type" value="mRNA"/>
</dbReference>
<dbReference type="EMBL" id="AK030492">
    <property type="protein sequence ID" value="BAC26989.1"/>
    <property type="molecule type" value="mRNA"/>
</dbReference>
<dbReference type="EMBL" id="AK046009">
    <property type="protein sequence ID" value="BAC32571.1"/>
    <property type="molecule type" value="mRNA"/>
</dbReference>
<dbReference type="EMBL" id="AK163188">
    <property type="protein sequence ID" value="BAE37226.1"/>
    <property type="molecule type" value="mRNA"/>
</dbReference>
<dbReference type="CCDS" id="CCDS56685.1"/>
<dbReference type="RefSeq" id="NP_001155294.1">
    <property type="nucleotide sequence ID" value="NM_001161822.1"/>
</dbReference>
<dbReference type="RefSeq" id="NP_064342.1">
    <property type="nucleotide sequence ID" value="NM_019958.4"/>
</dbReference>
<dbReference type="RefSeq" id="XP_006512520.1">
    <property type="nucleotide sequence ID" value="XM_006512457.5"/>
</dbReference>
<dbReference type="SMR" id="Q9QZB0"/>
<dbReference type="BioGRID" id="208043">
    <property type="interactions" value="1"/>
</dbReference>
<dbReference type="CORUM" id="Q9QZB0"/>
<dbReference type="FunCoup" id="Q9QZB0">
    <property type="interactions" value="676"/>
</dbReference>
<dbReference type="IntAct" id="Q9QZB0">
    <property type="interactions" value="1"/>
</dbReference>
<dbReference type="MINT" id="Q9QZB0"/>
<dbReference type="STRING" id="10090.ENSMUSP00000065825"/>
<dbReference type="iPTMnet" id="Q9QZB0"/>
<dbReference type="PhosphoSitePlus" id="Q9QZB0"/>
<dbReference type="PaxDb" id="10090-ENSMUSP00000116291"/>
<dbReference type="ProteomicsDB" id="253262"/>
<dbReference type="Antibodypedia" id="33390">
    <property type="antibodies" value="178 antibodies from 30 providers"/>
</dbReference>
<dbReference type="DNASU" id="56533"/>
<dbReference type="Ensembl" id="ENSMUST00000117676.8">
    <property type="protein sequence ID" value="ENSMUSP00000113519.2"/>
    <property type="gene ID" value="ENSMUSG00000019775.18"/>
</dbReference>
<dbReference type="Ensembl" id="ENSMUST00000131996.8">
    <property type="protein sequence ID" value="ENSMUSP00000116291.2"/>
    <property type="gene ID" value="ENSMUSG00000019775.18"/>
</dbReference>
<dbReference type="GeneID" id="56533"/>
<dbReference type="KEGG" id="mmu:56533"/>
<dbReference type="UCSC" id="uc007egg.2">
    <property type="organism name" value="mouse"/>
</dbReference>
<dbReference type="AGR" id="MGI:1927469"/>
<dbReference type="CTD" id="26575"/>
<dbReference type="MGI" id="MGI:1927469">
    <property type="gene designation" value="Rgs17"/>
</dbReference>
<dbReference type="VEuPathDB" id="HostDB:ENSMUSG00000019775"/>
<dbReference type="eggNOG" id="KOG3589">
    <property type="taxonomic scope" value="Eukaryota"/>
</dbReference>
<dbReference type="GeneTree" id="ENSGT00940000155393"/>
<dbReference type="InParanoid" id="Q9QZB0"/>
<dbReference type="OMA" id="LACEDLX"/>
<dbReference type="OrthoDB" id="10266999at2759"/>
<dbReference type="PhylomeDB" id="Q9QZB0"/>
<dbReference type="TreeFam" id="TF315837"/>
<dbReference type="Reactome" id="R-MMU-416476">
    <property type="pathway name" value="G alpha (q) signalling events"/>
</dbReference>
<dbReference type="Reactome" id="R-MMU-418594">
    <property type="pathway name" value="G alpha (i) signalling events"/>
</dbReference>
<dbReference type="Reactome" id="R-MMU-418597">
    <property type="pathway name" value="G alpha (z) signalling events"/>
</dbReference>
<dbReference type="BioGRID-ORCS" id="56533">
    <property type="hits" value="4 hits in 79 CRISPR screens"/>
</dbReference>
<dbReference type="ChiTaRS" id="Rgs17">
    <property type="organism name" value="mouse"/>
</dbReference>
<dbReference type="PRO" id="PR:Q9QZB0"/>
<dbReference type="Proteomes" id="UP000000589">
    <property type="component" value="Chromosome 10"/>
</dbReference>
<dbReference type="RNAct" id="Q9QZB0">
    <property type="molecule type" value="protein"/>
</dbReference>
<dbReference type="Bgee" id="ENSMUSG00000019775">
    <property type="expression patterns" value="Expressed in superior colliculus and 150 other cell types or tissues"/>
</dbReference>
<dbReference type="ExpressionAtlas" id="Q9QZB0">
    <property type="expression patterns" value="baseline and differential"/>
</dbReference>
<dbReference type="GO" id="GO:0005737">
    <property type="term" value="C:cytoplasm"/>
    <property type="evidence" value="ECO:0007669"/>
    <property type="project" value="UniProtKB-SubCell"/>
</dbReference>
<dbReference type="GO" id="GO:0016020">
    <property type="term" value="C:membrane"/>
    <property type="evidence" value="ECO:0007669"/>
    <property type="project" value="UniProtKB-SubCell"/>
</dbReference>
<dbReference type="GO" id="GO:0043005">
    <property type="term" value="C:neuron projection"/>
    <property type="evidence" value="ECO:0007669"/>
    <property type="project" value="UniProtKB-KW"/>
</dbReference>
<dbReference type="GO" id="GO:0005634">
    <property type="term" value="C:nucleus"/>
    <property type="evidence" value="ECO:0007669"/>
    <property type="project" value="UniProtKB-SubCell"/>
</dbReference>
<dbReference type="GO" id="GO:0045202">
    <property type="term" value="C:synapse"/>
    <property type="evidence" value="ECO:0007669"/>
    <property type="project" value="UniProtKB-SubCell"/>
</dbReference>
<dbReference type="GO" id="GO:0005096">
    <property type="term" value="F:GTPase activator activity"/>
    <property type="evidence" value="ECO:0000304"/>
    <property type="project" value="MGI"/>
</dbReference>
<dbReference type="GO" id="GO:0007186">
    <property type="term" value="P:G protein-coupled receptor signaling pathway"/>
    <property type="evidence" value="ECO:0000304"/>
    <property type="project" value="MGI"/>
</dbReference>
<dbReference type="GO" id="GO:0009968">
    <property type="term" value="P:negative regulation of signal transduction"/>
    <property type="evidence" value="ECO:0007669"/>
    <property type="project" value="UniProtKB-KW"/>
</dbReference>
<dbReference type="GO" id="GO:0001975">
    <property type="term" value="P:response to amphetamine"/>
    <property type="evidence" value="ECO:0007669"/>
    <property type="project" value="Ensembl"/>
</dbReference>
<dbReference type="FunFam" id="1.10.167.10:FF:000015">
    <property type="entry name" value="Regulator of G-protein signaling 17"/>
    <property type="match status" value="1"/>
</dbReference>
<dbReference type="Gene3D" id="1.10.167.10">
    <property type="entry name" value="Regulator of G-protein Signalling 4, domain 2"/>
    <property type="match status" value="1"/>
</dbReference>
<dbReference type="InterPro" id="IPR016137">
    <property type="entry name" value="RGS"/>
</dbReference>
<dbReference type="InterPro" id="IPR036305">
    <property type="entry name" value="RGS_sf"/>
</dbReference>
<dbReference type="InterPro" id="IPR044926">
    <property type="entry name" value="RGS_subdomain_2"/>
</dbReference>
<dbReference type="PANTHER" id="PTHR10845">
    <property type="entry name" value="REGULATOR OF G PROTEIN SIGNALING"/>
    <property type="match status" value="1"/>
</dbReference>
<dbReference type="PANTHER" id="PTHR10845:SF196">
    <property type="entry name" value="REGULATOR OF G-PROTEIN SIGNALING 17"/>
    <property type="match status" value="1"/>
</dbReference>
<dbReference type="Pfam" id="PF00615">
    <property type="entry name" value="RGS"/>
    <property type="match status" value="1"/>
</dbReference>
<dbReference type="PRINTS" id="PR01301">
    <property type="entry name" value="RGSPROTEIN"/>
</dbReference>
<dbReference type="SMART" id="SM00315">
    <property type="entry name" value="RGS"/>
    <property type="match status" value="1"/>
</dbReference>
<dbReference type="SUPFAM" id="SSF48097">
    <property type="entry name" value="Regulator of G-protein signaling, RGS"/>
    <property type="match status" value="1"/>
</dbReference>
<dbReference type="PROSITE" id="PS50132">
    <property type="entry name" value="RGS"/>
    <property type="match status" value="1"/>
</dbReference>
<comment type="function">
    <text evidence="1 4 5">Regulates G protein-coupled receptor signaling cascades, including signaling via muscarinic acetylcholine receptor CHRM2 and dopamine receptor DRD2 (By similarity). Inhibits signal transduction by increasing the GTPase activity of G protein alpha subunits, thereby driving them into their inactive GDP-bound form. Binds selectively to GNAZ and GNAI2 subunits, accelerates their GTPase activity and regulates their signaling activities. Negatively regulates mu-opioid receptor-mediated activation of the G-proteins.</text>
</comment>
<comment type="subunit">
    <text evidence="1 4 5 6">Interacts with GNAI1 and GNAQ (By similarity). Interacts with GNAZ and GNAI2 (PubMed:15827571, PubMed:16900103). Interacts with OPRM1 (PubMed:15827571). Forms a complex with mu-opioid receptors and G(alpha)z/i2 subunits, including GNAZ and GNAI2; the formation of this complex results in mu-opioid receptor desensitization (PubMed:15827571). Interacts with HINT1 (PubMed:31088288).</text>
</comment>
<comment type="subcellular location">
    <subcellularLocation>
        <location evidence="4 5">Membrane</location>
    </subcellularLocation>
    <subcellularLocation>
        <location evidence="4 5">Synapse</location>
        <location evidence="4 5">Synaptosome</location>
    </subcellularLocation>
    <subcellularLocation>
        <location evidence="5">Nucleus</location>
    </subcellularLocation>
    <subcellularLocation>
        <location evidence="5">Cytoplasm</location>
    </subcellularLocation>
</comment>
<comment type="tissue specificity">
    <text evidence="4 5">Detected in brain (at protein level) (PubMed:15827571, PubMed:16900103). Highly expressed in the hypothalamus, periaqueductal gray matter, and pons-medulla. Lower levels in the thalamus, cortex and spinal cord. Weak expression in the striatum and cerebellum.</text>
</comment>
<comment type="PTM">
    <text evidence="4">N- and O-glycosylated in synapsomal membranes.</text>
</comment>
<comment type="PTM">
    <text evidence="5">Serine phosphorylated in synapsomal membranes.</text>
</comment>
<comment type="PTM">
    <text evidence="5 6">Sumoylated with SUMO1 and SUM02 in synaptosomes. The sumoylated forms act as a scaffold for sequestering mu-opioid receptor-activated G(alpha) subunits (PubMed:16900103). Desumoylated by HINT1 (PubMed:31088288).</text>
</comment>
<proteinExistence type="evidence at protein level"/>
<keyword id="KW-0963">Cytoplasm</keyword>
<keyword id="KW-0325">Glycoprotein</keyword>
<keyword id="KW-0343">GTPase activation</keyword>
<keyword id="KW-0472">Membrane</keyword>
<keyword id="KW-0539">Nucleus</keyword>
<keyword id="KW-0597">Phosphoprotein</keyword>
<keyword id="KW-1185">Reference proteome</keyword>
<keyword id="KW-0734">Signal transduction inhibitor</keyword>
<keyword id="KW-0770">Synapse</keyword>
<keyword id="KW-0771">Synaptosome</keyword>
<keyword id="KW-0832">Ubl conjugation</keyword>
<organism>
    <name type="scientific">Mus musculus</name>
    <name type="common">Mouse</name>
    <dbReference type="NCBI Taxonomy" id="10090"/>
    <lineage>
        <taxon>Eukaryota</taxon>
        <taxon>Metazoa</taxon>
        <taxon>Chordata</taxon>
        <taxon>Craniata</taxon>
        <taxon>Vertebrata</taxon>
        <taxon>Euteleostomi</taxon>
        <taxon>Mammalia</taxon>
        <taxon>Eutheria</taxon>
        <taxon>Euarchontoglires</taxon>
        <taxon>Glires</taxon>
        <taxon>Rodentia</taxon>
        <taxon>Myomorpha</taxon>
        <taxon>Muroidea</taxon>
        <taxon>Muridae</taxon>
        <taxon>Murinae</taxon>
        <taxon>Mus</taxon>
        <taxon>Mus</taxon>
    </lineage>
</organism>
<name>RGS17_MOUSE</name>
<feature type="chain" id="PRO_0000204225" description="Regulator of G-protein signaling 17">
    <location>
        <begin position="1"/>
        <end position="210"/>
    </location>
</feature>
<feature type="domain" description="RGS" evidence="2">
    <location>
        <begin position="84"/>
        <end position="200"/>
    </location>
</feature>
<feature type="region of interest" description="Disordered" evidence="3">
    <location>
        <begin position="1"/>
        <end position="21"/>
    </location>
</feature>
<feature type="modified residue" description="Phosphotyrosine" evidence="8">
    <location>
        <position position="137"/>
    </location>
</feature>
<accession>Q9QZB0</accession>
<accession>Q543T9</accession>
<reference key="1">
    <citation type="submission" date="1999-10" db="EMBL/GenBank/DDBJ databases">
        <title>RGSZ2, a new member of the Gz-selective GAP family.</title>
        <authorList>
            <person name="Barker S.A."/>
            <person name="Ross E.M."/>
        </authorList>
    </citation>
    <scope>NUCLEOTIDE SEQUENCE [MRNA]</scope>
    <source>
        <strain>BALB/cJ</strain>
    </source>
</reference>
<reference key="2">
    <citation type="journal article" date="2005" name="Science">
        <title>The transcriptional landscape of the mammalian genome.</title>
        <authorList>
            <person name="Carninci P."/>
            <person name="Kasukawa T."/>
            <person name="Katayama S."/>
            <person name="Gough J."/>
            <person name="Frith M.C."/>
            <person name="Maeda N."/>
            <person name="Oyama R."/>
            <person name="Ravasi T."/>
            <person name="Lenhard B."/>
            <person name="Wells C."/>
            <person name="Kodzius R."/>
            <person name="Shimokawa K."/>
            <person name="Bajic V.B."/>
            <person name="Brenner S.E."/>
            <person name="Batalov S."/>
            <person name="Forrest A.R."/>
            <person name="Zavolan M."/>
            <person name="Davis M.J."/>
            <person name="Wilming L.G."/>
            <person name="Aidinis V."/>
            <person name="Allen J.E."/>
            <person name="Ambesi-Impiombato A."/>
            <person name="Apweiler R."/>
            <person name="Aturaliya R.N."/>
            <person name="Bailey T.L."/>
            <person name="Bansal M."/>
            <person name="Baxter L."/>
            <person name="Beisel K.W."/>
            <person name="Bersano T."/>
            <person name="Bono H."/>
            <person name="Chalk A.M."/>
            <person name="Chiu K.P."/>
            <person name="Choudhary V."/>
            <person name="Christoffels A."/>
            <person name="Clutterbuck D.R."/>
            <person name="Crowe M.L."/>
            <person name="Dalla E."/>
            <person name="Dalrymple B.P."/>
            <person name="de Bono B."/>
            <person name="Della Gatta G."/>
            <person name="di Bernardo D."/>
            <person name="Down T."/>
            <person name="Engstrom P."/>
            <person name="Fagiolini M."/>
            <person name="Faulkner G."/>
            <person name="Fletcher C.F."/>
            <person name="Fukushima T."/>
            <person name="Furuno M."/>
            <person name="Futaki S."/>
            <person name="Gariboldi M."/>
            <person name="Georgii-Hemming P."/>
            <person name="Gingeras T.R."/>
            <person name="Gojobori T."/>
            <person name="Green R.E."/>
            <person name="Gustincich S."/>
            <person name="Harbers M."/>
            <person name="Hayashi Y."/>
            <person name="Hensch T.K."/>
            <person name="Hirokawa N."/>
            <person name="Hill D."/>
            <person name="Huminiecki L."/>
            <person name="Iacono M."/>
            <person name="Ikeo K."/>
            <person name="Iwama A."/>
            <person name="Ishikawa T."/>
            <person name="Jakt M."/>
            <person name="Kanapin A."/>
            <person name="Katoh M."/>
            <person name="Kawasawa Y."/>
            <person name="Kelso J."/>
            <person name="Kitamura H."/>
            <person name="Kitano H."/>
            <person name="Kollias G."/>
            <person name="Krishnan S.P."/>
            <person name="Kruger A."/>
            <person name="Kummerfeld S.K."/>
            <person name="Kurochkin I.V."/>
            <person name="Lareau L.F."/>
            <person name="Lazarevic D."/>
            <person name="Lipovich L."/>
            <person name="Liu J."/>
            <person name="Liuni S."/>
            <person name="McWilliam S."/>
            <person name="Madan Babu M."/>
            <person name="Madera M."/>
            <person name="Marchionni L."/>
            <person name="Matsuda H."/>
            <person name="Matsuzawa S."/>
            <person name="Miki H."/>
            <person name="Mignone F."/>
            <person name="Miyake S."/>
            <person name="Morris K."/>
            <person name="Mottagui-Tabar S."/>
            <person name="Mulder N."/>
            <person name="Nakano N."/>
            <person name="Nakauchi H."/>
            <person name="Ng P."/>
            <person name="Nilsson R."/>
            <person name="Nishiguchi S."/>
            <person name="Nishikawa S."/>
            <person name="Nori F."/>
            <person name="Ohara O."/>
            <person name="Okazaki Y."/>
            <person name="Orlando V."/>
            <person name="Pang K.C."/>
            <person name="Pavan W.J."/>
            <person name="Pavesi G."/>
            <person name="Pesole G."/>
            <person name="Petrovsky N."/>
            <person name="Piazza S."/>
            <person name="Reed J."/>
            <person name="Reid J.F."/>
            <person name="Ring B.Z."/>
            <person name="Ringwald M."/>
            <person name="Rost B."/>
            <person name="Ruan Y."/>
            <person name="Salzberg S.L."/>
            <person name="Sandelin A."/>
            <person name="Schneider C."/>
            <person name="Schoenbach C."/>
            <person name="Sekiguchi K."/>
            <person name="Semple C.A."/>
            <person name="Seno S."/>
            <person name="Sessa L."/>
            <person name="Sheng Y."/>
            <person name="Shibata Y."/>
            <person name="Shimada H."/>
            <person name="Shimada K."/>
            <person name="Silva D."/>
            <person name="Sinclair B."/>
            <person name="Sperling S."/>
            <person name="Stupka E."/>
            <person name="Sugiura K."/>
            <person name="Sultana R."/>
            <person name="Takenaka Y."/>
            <person name="Taki K."/>
            <person name="Tammoja K."/>
            <person name="Tan S.L."/>
            <person name="Tang S."/>
            <person name="Taylor M.S."/>
            <person name="Tegner J."/>
            <person name="Teichmann S.A."/>
            <person name="Ueda H.R."/>
            <person name="van Nimwegen E."/>
            <person name="Verardo R."/>
            <person name="Wei C.L."/>
            <person name="Yagi K."/>
            <person name="Yamanishi H."/>
            <person name="Zabarovsky E."/>
            <person name="Zhu S."/>
            <person name="Zimmer A."/>
            <person name="Hide W."/>
            <person name="Bult C."/>
            <person name="Grimmond S.M."/>
            <person name="Teasdale R.D."/>
            <person name="Liu E.T."/>
            <person name="Brusic V."/>
            <person name="Quackenbush J."/>
            <person name="Wahlestedt C."/>
            <person name="Mattick J.S."/>
            <person name="Hume D.A."/>
            <person name="Kai C."/>
            <person name="Sasaki D."/>
            <person name="Tomaru Y."/>
            <person name="Fukuda S."/>
            <person name="Kanamori-Katayama M."/>
            <person name="Suzuki M."/>
            <person name="Aoki J."/>
            <person name="Arakawa T."/>
            <person name="Iida J."/>
            <person name="Imamura K."/>
            <person name="Itoh M."/>
            <person name="Kato T."/>
            <person name="Kawaji H."/>
            <person name="Kawagashira N."/>
            <person name="Kawashima T."/>
            <person name="Kojima M."/>
            <person name="Kondo S."/>
            <person name="Konno H."/>
            <person name="Nakano K."/>
            <person name="Ninomiya N."/>
            <person name="Nishio T."/>
            <person name="Okada M."/>
            <person name="Plessy C."/>
            <person name="Shibata K."/>
            <person name="Shiraki T."/>
            <person name="Suzuki S."/>
            <person name="Tagami M."/>
            <person name="Waki K."/>
            <person name="Watahiki A."/>
            <person name="Okamura-Oho Y."/>
            <person name="Suzuki H."/>
            <person name="Kawai J."/>
            <person name="Hayashizaki Y."/>
        </authorList>
    </citation>
    <scope>NUCLEOTIDE SEQUENCE [LARGE SCALE MRNA]</scope>
    <source>
        <strain>C57BL/6J</strain>
        <tissue>Cerebellum</tissue>
        <tissue>Corpora quadrigemina</tissue>
        <tissue>Olfactory bulb</tissue>
        <tissue>Pituitary</tissue>
    </source>
</reference>
<reference key="3">
    <citation type="journal article" date="2005" name="Neuropsychopharmacology">
        <title>The RGSZ2 protein exists in a complex with mu-opioid receptors and regulates the desensitizing capacity of Gz proteins.</title>
        <authorList>
            <person name="Garzan J."/>
            <person name="Rodriguez-Munoz M."/>
            <person name="Lopez-Fando A."/>
            <person name="Sanchez-Blazquez P."/>
        </authorList>
    </citation>
    <scope>INTERACTION WITH OPRM1; GNAZ AND GNAI2</scope>
    <scope>GLYCOSYLATION</scope>
    <scope>TISSUE SPECIFICITY</scope>
    <scope>FUNCTION</scope>
    <scope>SUBCELLULAR LOCATION</scope>
</reference>
<reference key="4">
    <citation type="journal article" date="2007" name="Neuropsychopharmacology">
        <title>Sumoylated RGS-Rz proteins act as scaffolds for mu-opioid receptors and G-protein complexes in mouse brain.</title>
        <authorList>
            <person name="Rodriguez-Munoz M."/>
            <person name="Bermudez D."/>
            <person name="Sanchez-Blazquez P."/>
            <person name="Garzon J."/>
        </authorList>
    </citation>
    <scope>SUMOYLATION</scope>
    <scope>PHOSPHORYLATION</scope>
    <scope>SUBCELLULAR LOCATION</scope>
    <scope>FUNCTION</scope>
    <scope>INTERACTION WITH GNAZ AND GNAI2</scope>
    <scope>TISSUE SPECIFICITY</scope>
</reference>
<reference key="5">
    <citation type="journal article" date="2008" name="J. Proteome Res.">
        <title>Large-scale identification and evolution indexing of tyrosine phosphorylation sites from murine brain.</title>
        <authorList>
            <person name="Ballif B.A."/>
            <person name="Carey G.R."/>
            <person name="Sunyaev S.R."/>
            <person name="Gygi S.P."/>
        </authorList>
    </citation>
    <scope>PHOSPHORYLATION [LARGE SCALE ANALYSIS] AT TYR-137</scope>
    <scope>IDENTIFICATION BY MASS SPECTROMETRY [LARGE SCALE ANALYSIS]</scope>
    <source>
        <tissue>Brain</tissue>
    </source>
</reference>
<reference key="6">
    <citation type="journal article" date="2019" name="Antioxid. Redox Signal.">
        <title>The Axonal Motor Neuropathy-Related HINT1 Protein Is a Zinc- and Calmodulin-Regulated Cysteine SUMO Protease.</title>
        <authorList>
            <person name="Cortes-Montero E."/>
            <person name="Rodriguez-Munoz M."/>
            <person name="Sanchez-Blazquez P."/>
            <person name="Garzon J."/>
        </authorList>
    </citation>
    <scope>INTERACTION WITH HINT1</scope>
    <scope>DESUMOYLATION</scope>
</reference>